<evidence type="ECO:0000255" key="1">
    <source>
        <dbReference type="HAMAP-Rule" id="MF_01333"/>
    </source>
</evidence>
<evidence type="ECO:0000305" key="2"/>
<sequence length="179" mass="20214">MSTLRTEYLENVAPKLQEEFGYSNAMQIPRLSKVVLNMGLGEAIQNNKILEGAVDELTLISGQKPVVTKAKKSIAAFKLREGMPIGVTATLRRDRMYDFLNKLVNVTLPRVRDFRGISPKAFDGRGNYTLGIREQIIFPEINYDRIDKVKGLNITIVTTAKNDEEGRRLLTLLGMPFRK</sequence>
<feature type="chain" id="PRO_1000142387" description="Large ribosomal subunit protein uL5">
    <location>
        <begin position="1"/>
        <end position="179"/>
    </location>
</feature>
<comment type="function">
    <text evidence="1">This is one of the proteins that bind and probably mediate the attachment of the 5S RNA into the large ribosomal subunit, where it forms part of the central protuberance. In the 70S ribosome it contacts protein S13 of the 30S subunit (bridge B1b), connecting the 2 subunits; this bridge is implicated in subunit movement. Contacts the P site tRNA; the 5S rRNA and some of its associated proteins might help stabilize positioning of ribosome-bound tRNAs.</text>
</comment>
<comment type="subunit">
    <text evidence="1">Part of the 50S ribosomal subunit; part of the 5S rRNA/L5/L18/L25 subcomplex. Contacts the 5S rRNA and the P site tRNA. Forms a bridge to the 30S subunit in the 70S ribosome.</text>
</comment>
<comment type="similarity">
    <text evidence="1">Belongs to the universal ribosomal protein uL5 family.</text>
</comment>
<accession>B8FES3</accession>
<dbReference type="EMBL" id="CP001322">
    <property type="protein sequence ID" value="ACL03600.1"/>
    <property type="molecule type" value="Genomic_DNA"/>
</dbReference>
<dbReference type="RefSeq" id="WP_012611031.1">
    <property type="nucleotide sequence ID" value="NC_011768.1"/>
</dbReference>
<dbReference type="SMR" id="B8FES3"/>
<dbReference type="KEGG" id="dal:Dalk_1903"/>
<dbReference type="eggNOG" id="COG0094">
    <property type="taxonomic scope" value="Bacteria"/>
</dbReference>
<dbReference type="HOGENOM" id="CLU_061015_2_1_7"/>
<dbReference type="Proteomes" id="UP000000739">
    <property type="component" value="Chromosome"/>
</dbReference>
<dbReference type="GO" id="GO:1990904">
    <property type="term" value="C:ribonucleoprotein complex"/>
    <property type="evidence" value="ECO:0007669"/>
    <property type="project" value="UniProtKB-KW"/>
</dbReference>
<dbReference type="GO" id="GO:0005840">
    <property type="term" value="C:ribosome"/>
    <property type="evidence" value="ECO:0007669"/>
    <property type="project" value="UniProtKB-KW"/>
</dbReference>
<dbReference type="GO" id="GO:0019843">
    <property type="term" value="F:rRNA binding"/>
    <property type="evidence" value="ECO:0007669"/>
    <property type="project" value="UniProtKB-UniRule"/>
</dbReference>
<dbReference type="GO" id="GO:0003735">
    <property type="term" value="F:structural constituent of ribosome"/>
    <property type="evidence" value="ECO:0007669"/>
    <property type="project" value="InterPro"/>
</dbReference>
<dbReference type="GO" id="GO:0000049">
    <property type="term" value="F:tRNA binding"/>
    <property type="evidence" value="ECO:0007669"/>
    <property type="project" value="UniProtKB-UniRule"/>
</dbReference>
<dbReference type="GO" id="GO:0006412">
    <property type="term" value="P:translation"/>
    <property type="evidence" value="ECO:0007669"/>
    <property type="project" value="UniProtKB-UniRule"/>
</dbReference>
<dbReference type="FunFam" id="3.30.1440.10:FF:000001">
    <property type="entry name" value="50S ribosomal protein L5"/>
    <property type="match status" value="1"/>
</dbReference>
<dbReference type="Gene3D" id="3.30.1440.10">
    <property type="match status" value="1"/>
</dbReference>
<dbReference type="HAMAP" id="MF_01333_B">
    <property type="entry name" value="Ribosomal_uL5_B"/>
    <property type="match status" value="1"/>
</dbReference>
<dbReference type="InterPro" id="IPR002132">
    <property type="entry name" value="Ribosomal_uL5"/>
</dbReference>
<dbReference type="InterPro" id="IPR020930">
    <property type="entry name" value="Ribosomal_uL5_bac-type"/>
</dbReference>
<dbReference type="InterPro" id="IPR031309">
    <property type="entry name" value="Ribosomal_uL5_C"/>
</dbReference>
<dbReference type="InterPro" id="IPR020929">
    <property type="entry name" value="Ribosomal_uL5_CS"/>
</dbReference>
<dbReference type="InterPro" id="IPR022803">
    <property type="entry name" value="Ribosomal_uL5_dom_sf"/>
</dbReference>
<dbReference type="InterPro" id="IPR031310">
    <property type="entry name" value="Ribosomal_uL5_N"/>
</dbReference>
<dbReference type="NCBIfam" id="NF000585">
    <property type="entry name" value="PRK00010.1"/>
    <property type="match status" value="1"/>
</dbReference>
<dbReference type="PANTHER" id="PTHR11994">
    <property type="entry name" value="60S RIBOSOMAL PROTEIN L11-RELATED"/>
    <property type="match status" value="1"/>
</dbReference>
<dbReference type="Pfam" id="PF00281">
    <property type="entry name" value="Ribosomal_L5"/>
    <property type="match status" value="1"/>
</dbReference>
<dbReference type="Pfam" id="PF00673">
    <property type="entry name" value="Ribosomal_L5_C"/>
    <property type="match status" value="1"/>
</dbReference>
<dbReference type="PIRSF" id="PIRSF002161">
    <property type="entry name" value="Ribosomal_L5"/>
    <property type="match status" value="1"/>
</dbReference>
<dbReference type="SUPFAM" id="SSF55282">
    <property type="entry name" value="RL5-like"/>
    <property type="match status" value="1"/>
</dbReference>
<dbReference type="PROSITE" id="PS00358">
    <property type="entry name" value="RIBOSOMAL_L5"/>
    <property type="match status" value="1"/>
</dbReference>
<protein>
    <recommendedName>
        <fullName evidence="1">Large ribosomal subunit protein uL5</fullName>
    </recommendedName>
    <alternativeName>
        <fullName evidence="2">50S ribosomal protein L5</fullName>
    </alternativeName>
</protein>
<reference key="1">
    <citation type="journal article" date="2012" name="Environ. Microbiol.">
        <title>The genome sequence of Desulfatibacillum alkenivorans AK-01: a blueprint for anaerobic alkane oxidation.</title>
        <authorList>
            <person name="Callaghan A.V."/>
            <person name="Morris B.E."/>
            <person name="Pereira I.A."/>
            <person name="McInerney M.J."/>
            <person name="Austin R.N."/>
            <person name="Groves J.T."/>
            <person name="Kukor J.J."/>
            <person name="Suflita J.M."/>
            <person name="Young L.Y."/>
            <person name="Zylstra G.J."/>
            <person name="Wawrik B."/>
        </authorList>
    </citation>
    <scope>NUCLEOTIDE SEQUENCE [LARGE SCALE GENOMIC DNA]</scope>
    <source>
        <strain>AK-01</strain>
    </source>
</reference>
<name>RL5_DESAL</name>
<keyword id="KW-1185">Reference proteome</keyword>
<keyword id="KW-0687">Ribonucleoprotein</keyword>
<keyword id="KW-0689">Ribosomal protein</keyword>
<keyword id="KW-0694">RNA-binding</keyword>
<keyword id="KW-0699">rRNA-binding</keyword>
<keyword id="KW-0820">tRNA-binding</keyword>
<gene>
    <name evidence="1" type="primary">rplE</name>
    <name type="ordered locus">Dalk_1903</name>
</gene>
<organism>
    <name type="scientific">Desulfatibacillum aliphaticivorans</name>
    <dbReference type="NCBI Taxonomy" id="218208"/>
    <lineage>
        <taxon>Bacteria</taxon>
        <taxon>Pseudomonadati</taxon>
        <taxon>Thermodesulfobacteriota</taxon>
        <taxon>Desulfobacteria</taxon>
        <taxon>Desulfobacterales</taxon>
        <taxon>Desulfatibacillaceae</taxon>
        <taxon>Desulfatibacillum</taxon>
    </lineage>
</organism>
<proteinExistence type="inferred from homology"/>